<evidence type="ECO:0000255" key="1">
    <source>
        <dbReference type="HAMAP-Rule" id="MF_00096"/>
    </source>
</evidence>
<feature type="chain" id="PRO_0000335239" description="DNA mismatch repair protein MutS">
    <location>
        <begin position="1"/>
        <end position="871"/>
    </location>
</feature>
<feature type="binding site" evidence="1">
    <location>
        <begin position="617"/>
        <end position="624"/>
    </location>
    <ligand>
        <name>ATP</name>
        <dbReference type="ChEBI" id="CHEBI:30616"/>
    </ligand>
</feature>
<protein>
    <recommendedName>
        <fullName evidence="1">DNA mismatch repair protein MutS</fullName>
    </recommendedName>
</protein>
<reference key="1">
    <citation type="journal article" date="2006" name="PLoS Biol.">
        <title>The genome of deep-sea vent chemolithoautotroph Thiomicrospira crunogena XCL-2.</title>
        <authorList>
            <person name="Scott K.M."/>
            <person name="Sievert S.M."/>
            <person name="Abril F.N."/>
            <person name="Ball L.A."/>
            <person name="Barrett C.J."/>
            <person name="Blake R.A."/>
            <person name="Boller A.J."/>
            <person name="Chain P.S.G."/>
            <person name="Clark J.A."/>
            <person name="Davis C.R."/>
            <person name="Detter C."/>
            <person name="Do K.F."/>
            <person name="Dobrinski K.P."/>
            <person name="Faza B.I."/>
            <person name="Fitzpatrick K.A."/>
            <person name="Freyermuth S.K."/>
            <person name="Harmer T.L."/>
            <person name="Hauser L.J."/>
            <person name="Huegler M."/>
            <person name="Kerfeld C.A."/>
            <person name="Klotz M.G."/>
            <person name="Kong W.W."/>
            <person name="Land M."/>
            <person name="Lapidus A."/>
            <person name="Larimer F.W."/>
            <person name="Longo D.L."/>
            <person name="Lucas S."/>
            <person name="Malfatti S.A."/>
            <person name="Massey S.E."/>
            <person name="Martin D.D."/>
            <person name="McCuddin Z."/>
            <person name="Meyer F."/>
            <person name="Moore J.L."/>
            <person name="Ocampo L.H. Jr."/>
            <person name="Paul J.H."/>
            <person name="Paulsen I.T."/>
            <person name="Reep D.K."/>
            <person name="Ren Q."/>
            <person name="Ross R.L."/>
            <person name="Sato P.Y."/>
            <person name="Thomas P."/>
            <person name="Tinkham L.E."/>
            <person name="Zeruth G.T."/>
        </authorList>
    </citation>
    <scope>NUCLEOTIDE SEQUENCE [LARGE SCALE GENOMIC DNA]</scope>
    <source>
        <strain>DSM 25203 / XCL-2</strain>
    </source>
</reference>
<keyword id="KW-0067">ATP-binding</keyword>
<keyword id="KW-0227">DNA damage</keyword>
<keyword id="KW-0234">DNA repair</keyword>
<keyword id="KW-0238">DNA-binding</keyword>
<keyword id="KW-0547">Nucleotide-binding</keyword>
<comment type="function">
    <text evidence="1">This protein is involved in the repair of mismatches in DNA. It is possible that it carries out the mismatch recognition step. This protein has a weak ATPase activity.</text>
</comment>
<comment type="similarity">
    <text evidence="1">Belongs to the DNA mismatch repair MutS family.</text>
</comment>
<accession>Q31F87</accession>
<organism>
    <name type="scientific">Hydrogenovibrio crunogenus (strain DSM 25203 / XCL-2)</name>
    <name type="common">Thiomicrospira crunogena</name>
    <dbReference type="NCBI Taxonomy" id="317025"/>
    <lineage>
        <taxon>Bacteria</taxon>
        <taxon>Pseudomonadati</taxon>
        <taxon>Pseudomonadota</taxon>
        <taxon>Gammaproteobacteria</taxon>
        <taxon>Thiotrichales</taxon>
        <taxon>Piscirickettsiaceae</taxon>
        <taxon>Hydrogenovibrio</taxon>
    </lineage>
</organism>
<dbReference type="EMBL" id="CP000109">
    <property type="protein sequence ID" value="ABB42186.1"/>
    <property type="molecule type" value="Genomic_DNA"/>
</dbReference>
<dbReference type="SMR" id="Q31F87"/>
<dbReference type="STRING" id="317025.Tcr_1594"/>
<dbReference type="KEGG" id="tcx:Tcr_1594"/>
<dbReference type="eggNOG" id="COG0249">
    <property type="taxonomic scope" value="Bacteria"/>
</dbReference>
<dbReference type="HOGENOM" id="CLU_002472_4_0_6"/>
<dbReference type="OrthoDB" id="9802448at2"/>
<dbReference type="GO" id="GO:0005829">
    <property type="term" value="C:cytosol"/>
    <property type="evidence" value="ECO:0007669"/>
    <property type="project" value="TreeGrafter"/>
</dbReference>
<dbReference type="GO" id="GO:0005524">
    <property type="term" value="F:ATP binding"/>
    <property type="evidence" value="ECO:0007669"/>
    <property type="project" value="UniProtKB-UniRule"/>
</dbReference>
<dbReference type="GO" id="GO:0140664">
    <property type="term" value="F:ATP-dependent DNA damage sensor activity"/>
    <property type="evidence" value="ECO:0007669"/>
    <property type="project" value="InterPro"/>
</dbReference>
<dbReference type="GO" id="GO:0003684">
    <property type="term" value="F:damaged DNA binding"/>
    <property type="evidence" value="ECO:0007669"/>
    <property type="project" value="UniProtKB-UniRule"/>
</dbReference>
<dbReference type="GO" id="GO:0030983">
    <property type="term" value="F:mismatched DNA binding"/>
    <property type="evidence" value="ECO:0007669"/>
    <property type="project" value="InterPro"/>
</dbReference>
<dbReference type="GO" id="GO:0006298">
    <property type="term" value="P:mismatch repair"/>
    <property type="evidence" value="ECO:0007669"/>
    <property type="project" value="UniProtKB-UniRule"/>
</dbReference>
<dbReference type="CDD" id="cd03284">
    <property type="entry name" value="ABC_MutS1"/>
    <property type="match status" value="1"/>
</dbReference>
<dbReference type="FunFam" id="1.10.1420.10:FF:000002">
    <property type="entry name" value="DNA mismatch repair protein MutS"/>
    <property type="match status" value="1"/>
</dbReference>
<dbReference type="FunFam" id="3.40.1170.10:FF:000001">
    <property type="entry name" value="DNA mismatch repair protein MutS"/>
    <property type="match status" value="1"/>
</dbReference>
<dbReference type="FunFam" id="3.40.50.300:FF:000870">
    <property type="entry name" value="MutS protein homolog 4"/>
    <property type="match status" value="1"/>
</dbReference>
<dbReference type="Gene3D" id="1.10.1420.10">
    <property type="match status" value="2"/>
</dbReference>
<dbReference type="Gene3D" id="6.10.140.430">
    <property type="match status" value="1"/>
</dbReference>
<dbReference type="Gene3D" id="3.40.1170.10">
    <property type="entry name" value="DNA repair protein MutS, domain I"/>
    <property type="match status" value="1"/>
</dbReference>
<dbReference type="Gene3D" id="3.30.420.110">
    <property type="entry name" value="MutS, connector domain"/>
    <property type="match status" value="1"/>
</dbReference>
<dbReference type="Gene3D" id="3.40.50.300">
    <property type="entry name" value="P-loop containing nucleotide triphosphate hydrolases"/>
    <property type="match status" value="1"/>
</dbReference>
<dbReference type="HAMAP" id="MF_00096">
    <property type="entry name" value="MutS"/>
    <property type="match status" value="1"/>
</dbReference>
<dbReference type="InterPro" id="IPR005748">
    <property type="entry name" value="DNA_mismatch_repair_MutS"/>
</dbReference>
<dbReference type="InterPro" id="IPR007695">
    <property type="entry name" value="DNA_mismatch_repair_MutS-lik_N"/>
</dbReference>
<dbReference type="InterPro" id="IPR017261">
    <property type="entry name" value="DNA_mismatch_repair_MutS/MSH"/>
</dbReference>
<dbReference type="InterPro" id="IPR000432">
    <property type="entry name" value="DNA_mismatch_repair_MutS_C"/>
</dbReference>
<dbReference type="InterPro" id="IPR007861">
    <property type="entry name" value="DNA_mismatch_repair_MutS_clamp"/>
</dbReference>
<dbReference type="InterPro" id="IPR007696">
    <property type="entry name" value="DNA_mismatch_repair_MutS_core"/>
</dbReference>
<dbReference type="InterPro" id="IPR016151">
    <property type="entry name" value="DNA_mismatch_repair_MutS_N"/>
</dbReference>
<dbReference type="InterPro" id="IPR036187">
    <property type="entry name" value="DNA_mismatch_repair_MutS_sf"/>
</dbReference>
<dbReference type="InterPro" id="IPR007860">
    <property type="entry name" value="DNA_mmatch_repair_MutS_con_dom"/>
</dbReference>
<dbReference type="InterPro" id="IPR045076">
    <property type="entry name" value="MutS"/>
</dbReference>
<dbReference type="InterPro" id="IPR036678">
    <property type="entry name" value="MutS_con_dom_sf"/>
</dbReference>
<dbReference type="InterPro" id="IPR027417">
    <property type="entry name" value="P-loop_NTPase"/>
</dbReference>
<dbReference type="NCBIfam" id="TIGR01070">
    <property type="entry name" value="mutS1"/>
    <property type="match status" value="1"/>
</dbReference>
<dbReference type="NCBIfam" id="NF003810">
    <property type="entry name" value="PRK05399.1"/>
    <property type="match status" value="1"/>
</dbReference>
<dbReference type="PANTHER" id="PTHR11361:SF34">
    <property type="entry name" value="DNA MISMATCH REPAIR PROTEIN MSH1, MITOCHONDRIAL"/>
    <property type="match status" value="1"/>
</dbReference>
<dbReference type="PANTHER" id="PTHR11361">
    <property type="entry name" value="DNA MISMATCH REPAIR PROTEIN MUTS FAMILY MEMBER"/>
    <property type="match status" value="1"/>
</dbReference>
<dbReference type="Pfam" id="PF01624">
    <property type="entry name" value="MutS_I"/>
    <property type="match status" value="1"/>
</dbReference>
<dbReference type="Pfam" id="PF05188">
    <property type="entry name" value="MutS_II"/>
    <property type="match status" value="1"/>
</dbReference>
<dbReference type="Pfam" id="PF05192">
    <property type="entry name" value="MutS_III"/>
    <property type="match status" value="1"/>
</dbReference>
<dbReference type="Pfam" id="PF05190">
    <property type="entry name" value="MutS_IV"/>
    <property type="match status" value="1"/>
</dbReference>
<dbReference type="Pfam" id="PF00488">
    <property type="entry name" value="MutS_V"/>
    <property type="match status" value="1"/>
</dbReference>
<dbReference type="PIRSF" id="PIRSF037677">
    <property type="entry name" value="DNA_mis_repair_Msh6"/>
    <property type="match status" value="1"/>
</dbReference>
<dbReference type="SMART" id="SM00534">
    <property type="entry name" value="MUTSac"/>
    <property type="match status" value="1"/>
</dbReference>
<dbReference type="SMART" id="SM00533">
    <property type="entry name" value="MUTSd"/>
    <property type="match status" value="1"/>
</dbReference>
<dbReference type="SUPFAM" id="SSF55271">
    <property type="entry name" value="DNA repair protein MutS, domain I"/>
    <property type="match status" value="1"/>
</dbReference>
<dbReference type="SUPFAM" id="SSF53150">
    <property type="entry name" value="DNA repair protein MutS, domain II"/>
    <property type="match status" value="1"/>
</dbReference>
<dbReference type="SUPFAM" id="SSF48334">
    <property type="entry name" value="DNA repair protein MutS, domain III"/>
    <property type="match status" value="1"/>
</dbReference>
<dbReference type="SUPFAM" id="SSF52540">
    <property type="entry name" value="P-loop containing nucleoside triphosphate hydrolases"/>
    <property type="match status" value="1"/>
</dbReference>
<dbReference type="PROSITE" id="PS00486">
    <property type="entry name" value="DNA_MISMATCH_REPAIR_2"/>
    <property type="match status" value="1"/>
</dbReference>
<proteinExistence type="inferred from homology"/>
<name>MUTS_HYDCU</name>
<sequence length="871" mass="96951">MADTIKHTPMMQQYLAVKADYPNQLLFYRMGDFYELFYEDAVKASELLEITLTARGKSGGNPIPMAGIPHHSAEGYLAKLVKLGQSVAICEQIGDPSISKGPVERKVVRVITPGTLVEDALLEDKSENLLAAIFQQADEYGLATLDVASGRFEATLLPDSTQLSAEVERLKPAEIILPDDPLFKQNLPESIQNRPGLVDYPSWHFEKDSCRKRLIDHFGTQDLVAFGCDQLPAVISAAGVILHYAQSMLQNTLAHVFSLQTYQADDALALDAMSRRNLELDTNLTGGKNHTLFAILDNATTAMGSRLMNRWLNQPLRNRDIINDRFNAIEDIIEQHSQEEFRSALKPIGDLERILSRVSLYSARPRDILHLGRSLNQLPELQALLKQQTANKWQQLSKQLGLYPELASQLETALVESPPMLMRDGGVFAEGYDSELDELRNLKNQAGDYLLALEAREKERTGITTLKVGYNRVHGYYIEVSKLQSDNVPADYVRRQTLKAQERYITPELKEFEDKVLSANEKALAREKWLYQQLLERLNQDLQALQRTAAALAETDVLVSLARQAINLNLTRPTLSSEPGIDIKQGRHLTVEALSNQPFIPNDTCFDEQRRLQIITGPNMGGKSTFMRQTALIAIMAYMGSFVPAESATLGPIDRIFTRIGASDDLTSGRSTFMVEMTETANILHHASPESLILMDEVGRGTSTFDGLALAWAIAEQMAQSIQGYCLFATHYFELTTLVEQFNNTVNIHLSAIEHQDKIVFMHQVEEGPASQSYGLQVAALAGVPTAVIDKAKKHLHRLENQTAAQQQTSGTASSAKESVQQFDLFAQPALPEAIETMLTDLKALSVDDLTPRQALEKLYEVTNTVKNASE</sequence>
<gene>
    <name evidence="1" type="primary">mutS</name>
    <name type="ordered locus">Tcr_1594</name>
</gene>